<dbReference type="EC" id="3.6.5.n1" evidence="1"/>
<dbReference type="EMBL" id="CR931997">
    <property type="protein sequence ID" value="CAI36736.1"/>
    <property type="molecule type" value="Genomic_DNA"/>
</dbReference>
<dbReference type="RefSeq" id="WP_005296435.1">
    <property type="nucleotide sequence ID" value="NC_007164.1"/>
</dbReference>
<dbReference type="SMR" id="Q4JWS1"/>
<dbReference type="STRING" id="306537.jk0577"/>
<dbReference type="GeneID" id="92738080"/>
<dbReference type="KEGG" id="cjk:jk0577"/>
<dbReference type="eggNOG" id="COG0481">
    <property type="taxonomic scope" value="Bacteria"/>
</dbReference>
<dbReference type="HOGENOM" id="CLU_009995_3_3_11"/>
<dbReference type="OrthoDB" id="9801472at2"/>
<dbReference type="Proteomes" id="UP000000545">
    <property type="component" value="Chromosome"/>
</dbReference>
<dbReference type="GO" id="GO:0005886">
    <property type="term" value="C:plasma membrane"/>
    <property type="evidence" value="ECO:0007669"/>
    <property type="project" value="UniProtKB-SubCell"/>
</dbReference>
<dbReference type="GO" id="GO:0005525">
    <property type="term" value="F:GTP binding"/>
    <property type="evidence" value="ECO:0007669"/>
    <property type="project" value="UniProtKB-UniRule"/>
</dbReference>
<dbReference type="GO" id="GO:0003924">
    <property type="term" value="F:GTPase activity"/>
    <property type="evidence" value="ECO:0007669"/>
    <property type="project" value="UniProtKB-UniRule"/>
</dbReference>
<dbReference type="GO" id="GO:0043022">
    <property type="term" value="F:ribosome binding"/>
    <property type="evidence" value="ECO:0007669"/>
    <property type="project" value="UniProtKB-UniRule"/>
</dbReference>
<dbReference type="GO" id="GO:0003746">
    <property type="term" value="F:translation elongation factor activity"/>
    <property type="evidence" value="ECO:0007669"/>
    <property type="project" value="UniProtKB-UniRule"/>
</dbReference>
<dbReference type="GO" id="GO:0045727">
    <property type="term" value="P:positive regulation of translation"/>
    <property type="evidence" value="ECO:0007669"/>
    <property type="project" value="UniProtKB-UniRule"/>
</dbReference>
<dbReference type="CDD" id="cd03699">
    <property type="entry name" value="EF4_II"/>
    <property type="match status" value="1"/>
</dbReference>
<dbReference type="CDD" id="cd16260">
    <property type="entry name" value="EF4_III"/>
    <property type="match status" value="1"/>
</dbReference>
<dbReference type="CDD" id="cd01890">
    <property type="entry name" value="LepA"/>
    <property type="match status" value="1"/>
</dbReference>
<dbReference type="CDD" id="cd03709">
    <property type="entry name" value="lepA_C"/>
    <property type="match status" value="1"/>
</dbReference>
<dbReference type="FunFam" id="3.30.70.240:FF:000011">
    <property type="entry name" value="Elongation factor 4"/>
    <property type="match status" value="1"/>
</dbReference>
<dbReference type="FunFam" id="3.40.50.300:FF:000078">
    <property type="entry name" value="Elongation factor 4"/>
    <property type="match status" value="1"/>
</dbReference>
<dbReference type="FunFam" id="2.40.30.10:FF:000015">
    <property type="entry name" value="Translation factor GUF1, mitochondrial"/>
    <property type="match status" value="1"/>
</dbReference>
<dbReference type="FunFam" id="3.30.70.2570:FF:000001">
    <property type="entry name" value="Translation factor GUF1, mitochondrial"/>
    <property type="match status" value="1"/>
</dbReference>
<dbReference type="FunFam" id="3.30.70.870:FF:000004">
    <property type="entry name" value="Translation factor GUF1, mitochondrial"/>
    <property type="match status" value="1"/>
</dbReference>
<dbReference type="Gene3D" id="3.30.70.240">
    <property type="match status" value="1"/>
</dbReference>
<dbReference type="Gene3D" id="3.30.70.2570">
    <property type="entry name" value="Elongation factor 4, C-terminal domain"/>
    <property type="match status" value="1"/>
</dbReference>
<dbReference type="Gene3D" id="3.30.70.870">
    <property type="entry name" value="Elongation Factor G (Translational Gtpase), domain 3"/>
    <property type="match status" value="1"/>
</dbReference>
<dbReference type="Gene3D" id="3.40.50.300">
    <property type="entry name" value="P-loop containing nucleotide triphosphate hydrolases"/>
    <property type="match status" value="1"/>
</dbReference>
<dbReference type="Gene3D" id="2.40.30.10">
    <property type="entry name" value="Translation factors"/>
    <property type="match status" value="1"/>
</dbReference>
<dbReference type="HAMAP" id="MF_00071">
    <property type="entry name" value="LepA"/>
    <property type="match status" value="1"/>
</dbReference>
<dbReference type="InterPro" id="IPR006297">
    <property type="entry name" value="EF-4"/>
</dbReference>
<dbReference type="InterPro" id="IPR035647">
    <property type="entry name" value="EFG_III/V"/>
</dbReference>
<dbReference type="InterPro" id="IPR000640">
    <property type="entry name" value="EFG_V-like"/>
</dbReference>
<dbReference type="InterPro" id="IPR004161">
    <property type="entry name" value="EFTu-like_2"/>
</dbReference>
<dbReference type="InterPro" id="IPR031157">
    <property type="entry name" value="G_TR_CS"/>
</dbReference>
<dbReference type="InterPro" id="IPR038363">
    <property type="entry name" value="LepA_C_sf"/>
</dbReference>
<dbReference type="InterPro" id="IPR013842">
    <property type="entry name" value="LepA_CTD"/>
</dbReference>
<dbReference type="InterPro" id="IPR035654">
    <property type="entry name" value="LepA_IV"/>
</dbReference>
<dbReference type="InterPro" id="IPR027417">
    <property type="entry name" value="P-loop_NTPase"/>
</dbReference>
<dbReference type="InterPro" id="IPR005225">
    <property type="entry name" value="Small_GTP-bd"/>
</dbReference>
<dbReference type="InterPro" id="IPR000795">
    <property type="entry name" value="T_Tr_GTP-bd_dom"/>
</dbReference>
<dbReference type="InterPro" id="IPR009000">
    <property type="entry name" value="Transl_B-barrel_sf"/>
</dbReference>
<dbReference type="NCBIfam" id="TIGR01393">
    <property type="entry name" value="lepA"/>
    <property type="match status" value="1"/>
</dbReference>
<dbReference type="NCBIfam" id="TIGR00231">
    <property type="entry name" value="small_GTP"/>
    <property type="match status" value="1"/>
</dbReference>
<dbReference type="PANTHER" id="PTHR43512:SF4">
    <property type="entry name" value="TRANSLATION FACTOR GUF1 HOMOLOG, CHLOROPLASTIC"/>
    <property type="match status" value="1"/>
</dbReference>
<dbReference type="PANTHER" id="PTHR43512">
    <property type="entry name" value="TRANSLATION FACTOR GUF1-RELATED"/>
    <property type="match status" value="1"/>
</dbReference>
<dbReference type="Pfam" id="PF00679">
    <property type="entry name" value="EFG_C"/>
    <property type="match status" value="1"/>
</dbReference>
<dbReference type="Pfam" id="PF00009">
    <property type="entry name" value="GTP_EFTU"/>
    <property type="match status" value="1"/>
</dbReference>
<dbReference type="Pfam" id="PF03144">
    <property type="entry name" value="GTP_EFTU_D2"/>
    <property type="match status" value="1"/>
</dbReference>
<dbReference type="Pfam" id="PF06421">
    <property type="entry name" value="LepA_C"/>
    <property type="match status" value="1"/>
</dbReference>
<dbReference type="PRINTS" id="PR00315">
    <property type="entry name" value="ELONGATNFCT"/>
</dbReference>
<dbReference type="SMART" id="SM00838">
    <property type="entry name" value="EFG_C"/>
    <property type="match status" value="1"/>
</dbReference>
<dbReference type="SUPFAM" id="SSF54980">
    <property type="entry name" value="EF-G C-terminal domain-like"/>
    <property type="match status" value="2"/>
</dbReference>
<dbReference type="SUPFAM" id="SSF52540">
    <property type="entry name" value="P-loop containing nucleoside triphosphate hydrolases"/>
    <property type="match status" value="1"/>
</dbReference>
<dbReference type="SUPFAM" id="SSF50447">
    <property type="entry name" value="Translation proteins"/>
    <property type="match status" value="1"/>
</dbReference>
<dbReference type="PROSITE" id="PS00301">
    <property type="entry name" value="G_TR_1"/>
    <property type="match status" value="1"/>
</dbReference>
<dbReference type="PROSITE" id="PS51722">
    <property type="entry name" value="G_TR_2"/>
    <property type="match status" value="1"/>
</dbReference>
<keyword id="KW-1003">Cell membrane</keyword>
<keyword id="KW-0342">GTP-binding</keyword>
<keyword id="KW-0378">Hydrolase</keyword>
<keyword id="KW-0472">Membrane</keyword>
<keyword id="KW-0547">Nucleotide-binding</keyword>
<keyword id="KW-0648">Protein biosynthesis</keyword>
<keyword id="KW-1185">Reference proteome</keyword>
<proteinExistence type="inferred from homology"/>
<sequence>MAAKQKNYATETFTDPERIRNFCIIAHIDHGKSTLADRILQMSGVVEDRDMRDQYLDNMDIERERGITIKAQNVRLPWVPKTGAHAGEELVMHLIDTPGHVDFTYEVSRALEACEGCILLVDAAQGIEAQTLANLYLAMENDLEIIPVLNKIDLPAADPDKYALEIAHIIGCEPEDVLRVSGKTGEGVSELLDRVCELVPAPVGDADAPARAMIFDSVYDIYRGVVTYVRMMDGKLESRQKIQMMSTGATHETLEIGVVSPEPTKTKGLGVGEVGYIITGVKDVRQSKVGDTITWAVNGAETPLKGYQEPTPMVYSGLFPISADQYPDLREAIEKLQLNDASLTFEPETSVALGFGFRCGFLGLLHMEITRARLEREFDLDLISTAPSVVYRVVKEDGSEVMVRNPSDWPGGKMREIYEPIVKMTVIVPAEFLGATMELCQSKRGQMGGMDYLSEDRVELRYTMPLGEIIFDFFDQLKSRTKGYASLNYEEAGEQLADLVKVDILLQGDPVDAFSAIVHRENAHWYGNKMTVKLKELIPRQQFEVPVQAAIGSKIIARENIRALRKDVLSKCYGGDVSRKRKLLEKQKEGKKRMKAIGSVSVPQEAFVAALSTDAD</sequence>
<accession>Q4JWS1</accession>
<comment type="function">
    <text evidence="1">Required for accurate and efficient protein synthesis under certain stress conditions. May act as a fidelity factor of the translation reaction, by catalyzing a one-codon backward translocation of tRNAs on improperly translocated ribosomes. Back-translocation proceeds from a post-translocation (POST) complex to a pre-translocation (PRE) complex, thus giving elongation factor G a second chance to translocate the tRNAs correctly. Binds to ribosomes in a GTP-dependent manner.</text>
</comment>
<comment type="catalytic activity">
    <reaction evidence="1">
        <text>GTP + H2O = GDP + phosphate + H(+)</text>
        <dbReference type="Rhea" id="RHEA:19669"/>
        <dbReference type="ChEBI" id="CHEBI:15377"/>
        <dbReference type="ChEBI" id="CHEBI:15378"/>
        <dbReference type="ChEBI" id="CHEBI:37565"/>
        <dbReference type="ChEBI" id="CHEBI:43474"/>
        <dbReference type="ChEBI" id="CHEBI:58189"/>
        <dbReference type="EC" id="3.6.5.n1"/>
    </reaction>
</comment>
<comment type="subcellular location">
    <subcellularLocation>
        <location evidence="1">Cell membrane</location>
        <topology evidence="1">Peripheral membrane protein</topology>
        <orientation evidence="1">Cytoplasmic side</orientation>
    </subcellularLocation>
</comment>
<comment type="similarity">
    <text evidence="1">Belongs to the TRAFAC class translation factor GTPase superfamily. Classic translation factor GTPase family. LepA subfamily.</text>
</comment>
<protein>
    <recommendedName>
        <fullName evidence="1">Elongation factor 4</fullName>
        <shortName evidence="1">EF-4</shortName>
        <ecNumber evidence="1">3.6.5.n1</ecNumber>
    </recommendedName>
    <alternativeName>
        <fullName evidence="1">Ribosomal back-translocase LepA</fullName>
    </alternativeName>
</protein>
<gene>
    <name evidence="1" type="primary">lepA</name>
    <name type="ordered locus">jk0577</name>
</gene>
<organism>
    <name type="scientific">Corynebacterium jeikeium (strain K411)</name>
    <dbReference type="NCBI Taxonomy" id="306537"/>
    <lineage>
        <taxon>Bacteria</taxon>
        <taxon>Bacillati</taxon>
        <taxon>Actinomycetota</taxon>
        <taxon>Actinomycetes</taxon>
        <taxon>Mycobacteriales</taxon>
        <taxon>Corynebacteriaceae</taxon>
        <taxon>Corynebacterium</taxon>
    </lineage>
</organism>
<evidence type="ECO:0000255" key="1">
    <source>
        <dbReference type="HAMAP-Rule" id="MF_00071"/>
    </source>
</evidence>
<name>LEPA_CORJK</name>
<feature type="chain" id="PRO_0000224754" description="Elongation factor 4">
    <location>
        <begin position="1"/>
        <end position="616"/>
    </location>
</feature>
<feature type="domain" description="tr-type G">
    <location>
        <begin position="17"/>
        <end position="203"/>
    </location>
</feature>
<feature type="binding site" evidence="1">
    <location>
        <begin position="29"/>
        <end position="34"/>
    </location>
    <ligand>
        <name>GTP</name>
        <dbReference type="ChEBI" id="CHEBI:37565"/>
    </ligand>
</feature>
<feature type="binding site" evidence="1">
    <location>
        <begin position="150"/>
        <end position="153"/>
    </location>
    <ligand>
        <name>GTP</name>
        <dbReference type="ChEBI" id="CHEBI:37565"/>
    </ligand>
</feature>
<reference key="1">
    <citation type="journal article" date="2005" name="J. Bacteriol.">
        <title>Complete genome sequence and analysis of the multiresistant nosocomial pathogen Corynebacterium jeikeium K411, a lipid-requiring bacterium of the human skin flora.</title>
        <authorList>
            <person name="Tauch A."/>
            <person name="Kaiser O."/>
            <person name="Hain T."/>
            <person name="Goesmann A."/>
            <person name="Weisshaar B."/>
            <person name="Albersmeier A."/>
            <person name="Bekel T."/>
            <person name="Bischoff N."/>
            <person name="Brune I."/>
            <person name="Chakraborty T."/>
            <person name="Kalinowski J."/>
            <person name="Meyer F."/>
            <person name="Rupp O."/>
            <person name="Schneiker S."/>
            <person name="Viehoever P."/>
            <person name="Puehler A."/>
        </authorList>
    </citation>
    <scope>NUCLEOTIDE SEQUENCE [LARGE SCALE GENOMIC DNA]</scope>
    <source>
        <strain>K411</strain>
    </source>
</reference>